<gene>
    <name evidence="1" type="primary">hslU</name>
    <name type="ordered locus">Tola_0469</name>
</gene>
<evidence type="ECO:0000255" key="1">
    <source>
        <dbReference type="HAMAP-Rule" id="MF_00249"/>
    </source>
</evidence>
<feature type="chain" id="PRO_1000204533" description="ATP-dependent protease ATPase subunit HslU">
    <location>
        <begin position="1"/>
        <end position="443"/>
    </location>
</feature>
<feature type="binding site" evidence="1">
    <location>
        <position position="18"/>
    </location>
    <ligand>
        <name>ATP</name>
        <dbReference type="ChEBI" id="CHEBI:30616"/>
    </ligand>
</feature>
<feature type="binding site" evidence="1">
    <location>
        <begin position="60"/>
        <end position="65"/>
    </location>
    <ligand>
        <name>ATP</name>
        <dbReference type="ChEBI" id="CHEBI:30616"/>
    </ligand>
</feature>
<feature type="binding site" evidence="1">
    <location>
        <position position="256"/>
    </location>
    <ligand>
        <name>ATP</name>
        <dbReference type="ChEBI" id="CHEBI:30616"/>
    </ligand>
</feature>
<feature type="binding site" evidence="1">
    <location>
        <position position="321"/>
    </location>
    <ligand>
        <name>ATP</name>
        <dbReference type="ChEBI" id="CHEBI:30616"/>
    </ligand>
</feature>
<feature type="binding site" evidence="1">
    <location>
        <position position="393"/>
    </location>
    <ligand>
        <name>ATP</name>
        <dbReference type="ChEBI" id="CHEBI:30616"/>
    </ligand>
</feature>
<organism>
    <name type="scientific">Tolumonas auensis (strain DSM 9187 / NBRC 110442 / TA 4)</name>
    <dbReference type="NCBI Taxonomy" id="595494"/>
    <lineage>
        <taxon>Bacteria</taxon>
        <taxon>Pseudomonadati</taxon>
        <taxon>Pseudomonadota</taxon>
        <taxon>Gammaproteobacteria</taxon>
        <taxon>Aeromonadales</taxon>
        <taxon>Aeromonadaceae</taxon>
        <taxon>Tolumonas</taxon>
    </lineage>
</organism>
<comment type="function">
    <text evidence="1">ATPase subunit of a proteasome-like degradation complex; this subunit has chaperone activity. The binding of ATP and its subsequent hydrolysis by HslU are essential for unfolding of protein substrates subsequently hydrolyzed by HslV. HslU recognizes the N-terminal part of its protein substrates and unfolds these before they are guided to HslV for hydrolysis.</text>
</comment>
<comment type="subunit">
    <text evidence="1">A double ring-shaped homohexamer of HslV is capped on each side by a ring-shaped HslU homohexamer. The assembly of the HslU/HslV complex is dependent on binding of ATP.</text>
</comment>
<comment type="subcellular location">
    <subcellularLocation>
        <location evidence="1">Cytoplasm</location>
    </subcellularLocation>
</comment>
<comment type="similarity">
    <text evidence="1">Belongs to the ClpX chaperone family. HslU subfamily.</text>
</comment>
<protein>
    <recommendedName>
        <fullName evidence="1">ATP-dependent protease ATPase subunit HslU</fullName>
    </recommendedName>
    <alternativeName>
        <fullName evidence="1">Unfoldase HslU</fullName>
    </alternativeName>
</protein>
<name>HSLU_TOLAT</name>
<accession>C4L9W9</accession>
<proteinExistence type="inferred from homology"/>
<reference key="1">
    <citation type="submission" date="2009-05" db="EMBL/GenBank/DDBJ databases">
        <title>Complete sequence of Tolumonas auensis DSM 9187.</title>
        <authorList>
            <consortium name="US DOE Joint Genome Institute"/>
            <person name="Lucas S."/>
            <person name="Copeland A."/>
            <person name="Lapidus A."/>
            <person name="Glavina del Rio T."/>
            <person name="Tice H."/>
            <person name="Bruce D."/>
            <person name="Goodwin L."/>
            <person name="Pitluck S."/>
            <person name="Chertkov O."/>
            <person name="Brettin T."/>
            <person name="Detter J.C."/>
            <person name="Han C."/>
            <person name="Larimer F."/>
            <person name="Land M."/>
            <person name="Hauser L."/>
            <person name="Kyrpides N."/>
            <person name="Mikhailova N."/>
            <person name="Spring S."/>
            <person name="Beller H."/>
        </authorList>
    </citation>
    <scope>NUCLEOTIDE SEQUENCE [LARGE SCALE GENOMIC DNA]</scope>
    <source>
        <strain>DSM 9187 / NBRC 110442 / TA 4</strain>
    </source>
</reference>
<keyword id="KW-0067">ATP-binding</keyword>
<keyword id="KW-0143">Chaperone</keyword>
<keyword id="KW-0963">Cytoplasm</keyword>
<keyword id="KW-0547">Nucleotide-binding</keyword>
<keyword id="KW-1185">Reference proteome</keyword>
<keyword id="KW-0346">Stress response</keyword>
<sequence>MSEMTPREIVHELDRHIIGQAEAKRAVAIALRNRWRRMQLSNELRQEVAPKNILMIGPTGVGKTEIARRLAKLANAPFIKVEATKFTEVGYVGKEVDTIIRDLTDMALKMMREQEMEKVRFRAHEAAEERVLDVLLPPARSNWGEAEKSETGTHTRQIFRKKLREGELDDKEIEIDVAAPQMGVEIMAPPGMEEMTNQLQGLFQNMSAGNTHKRKLKVKDALKQLVEEEAGRLLNPEELKEKTIHAVENNGIVFIDEFDKICKRGESSGPDVSREGVQRDLLPLIEGCTVNTKHGMVRTDHILFIASGAFQIAKPSDLIPELQGRLPIRVELKNLTVDDFERILTEPNASLTEQYQALMATEQVKIEFTAEGIRSIAEAAWQVNERTENIGARRLHTVLEKLMEDISYDAADNAGQLFSIDAEYVNRYLGALIEDEDLSRFIL</sequence>
<dbReference type="EMBL" id="CP001616">
    <property type="protein sequence ID" value="ACQ92098.1"/>
    <property type="molecule type" value="Genomic_DNA"/>
</dbReference>
<dbReference type="RefSeq" id="WP_012728697.1">
    <property type="nucleotide sequence ID" value="NC_012691.1"/>
</dbReference>
<dbReference type="SMR" id="C4L9W9"/>
<dbReference type="STRING" id="595494.Tola_0469"/>
<dbReference type="KEGG" id="tau:Tola_0469"/>
<dbReference type="eggNOG" id="COG1220">
    <property type="taxonomic scope" value="Bacteria"/>
</dbReference>
<dbReference type="HOGENOM" id="CLU_033123_0_0_6"/>
<dbReference type="OrthoDB" id="9804062at2"/>
<dbReference type="Proteomes" id="UP000009073">
    <property type="component" value="Chromosome"/>
</dbReference>
<dbReference type="GO" id="GO:0009376">
    <property type="term" value="C:HslUV protease complex"/>
    <property type="evidence" value="ECO:0007669"/>
    <property type="project" value="UniProtKB-UniRule"/>
</dbReference>
<dbReference type="GO" id="GO:0005524">
    <property type="term" value="F:ATP binding"/>
    <property type="evidence" value="ECO:0007669"/>
    <property type="project" value="UniProtKB-UniRule"/>
</dbReference>
<dbReference type="GO" id="GO:0016887">
    <property type="term" value="F:ATP hydrolysis activity"/>
    <property type="evidence" value="ECO:0007669"/>
    <property type="project" value="InterPro"/>
</dbReference>
<dbReference type="GO" id="GO:0008233">
    <property type="term" value="F:peptidase activity"/>
    <property type="evidence" value="ECO:0007669"/>
    <property type="project" value="InterPro"/>
</dbReference>
<dbReference type="GO" id="GO:0036402">
    <property type="term" value="F:proteasome-activating activity"/>
    <property type="evidence" value="ECO:0007669"/>
    <property type="project" value="UniProtKB-UniRule"/>
</dbReference>
<dbReference type="GO" id="GO:0043335">
    <property type="term" value="P:protein unfolding"/>
    <property type="evidence" value="ECO:0007669"/>
    <property type="project" value="UniProtKB-UniRule"/>
</dbReference>
<dbReference type="GO" id="GO:0051603">
    <property type="term" value="P:proteolysis involved in protein catabolic process"/>
    <property type="evidence" value="ECO:0007669"/>
    <property type="project" value="TreeGrafter"/>
</dbReference>
<dbReference type="CDD" id="cd19498">
    <property type="entry name" value="RecA-like_HslU"/>
    <property type="match status" value="1"/>
</dbReference>
<dbReference type="FunFam" id="1.10.8.10:FF:000028">
    <property type="entry name" value="ATP-dependent protease ATPase subunit HslU"/>
    <property type="match status" value="1"/>
</dbReference>
<dbReference type="FunFam" id="1.10.8.60:FF:000027">
    <property type="entry name" value="ATP-dependent protease ATPase subunit HslU"/>
    <property type="match status" value="1"/>
</dbReference>
<dbReference type="FunFam" id="3.40.50.300:FF:000213">
    <property type="entry name" value="ATP-dependent protease ATPase subunit HslU"/>
    <property type="match status" value="1"/>
</dbReference>
<dbReference type="FunFam" id="3.40.50.300:FF:000220">
    <property type="entry name" value="ATP-dependent protease ATPase subunit HslU"/>
    <property type="match status" value="1"/>
</dbReference>
<dbReference type="Gene3D" id="1.10.8.60">
    <property type="match status" value="1"/>
</dbReference>
<dbReference type="Gene3D" id="1.10.8.10">
    <property type="entry name" value="DNA helicase RuvA subunit, C-terminal domain"/>
    <property type="match status" value="1"/>
</dbReference>
<dbReference type="Gene3D" id="3.40.50.300">
    <property type="entry name" value="P-loop containing nucleotide triphosphate hydrolases"/>
    <property type="match status" value="2"/>
</dbReference>
<dbReference type="HAMAP" id="MF_00249">
    <property type="entry name" value="HslU"/>
    <property type="match status" value="1"/>
</dbReference>
<dbReference type="InterPro" id="IPR003593">
    <property type="entry name" value="AAA+_ATPase"/>
</dbReference>
<dbReference type="InterPro" id="IPR050052">
    <property type="entry name" value="ATP-dep_Clp_protease_ClpX"/>
</dbReference>
<dbReference type="InterPro" id="IPR003959">
    <property type="entry name" value="ATPase_AAA_core"/>
</dbReference>
<dbReference type="InterPro" id="IPR019489">
    <property type="entry name" value="Clp_ATPase_C"/>
</dbReference>
<dbReference type="InterPro" id="IPR004491">
    <property type="entry name" value="HslU"/>
</dbReference>
<dbReference type="InterPro" id="IPR027417">
    <property type="entry name" value="P-loop_NTPase"/>
</dbReference>
<dbReference type="NCBIfam" id="TIGR00390">
    <property type="entry name" value="hslU"/>
    <property type="match status" value="1"/>
</dbReference>
<dbReference type="NCBIfam" id="NF003544">
    <property type="entry name" value="PRK05201.1"/>
    <property type="match status" value="1"/>
</dbReference>
<dbReference type="PANTHER" id="PTHR48102">
    <property type="entry name" value="ATP-DEPENDENT CLP PROTEASE ATP-BINDING SUBUNIT CLPX-LIKE, MITOCHONDRIAL-RELATED"/>
    <property type="match status" value="1"/>
</dbReference>
<dbReference type="PANTHER" id="PTHR48102:SF3">
    <property type="entry name" value="ATP-DEPENDENT PROTEASE ATPASE SUBUNIT HSLU"/>
    <property type="match status" value="1"/>
</dbReference>
<dbReference type="Pfam" id="PF00004">
    <property type="entry name" value="AAA"/>
    <property type="match status" value="1"/>
</dbReference>
<dbReference type="Pfam" id="PF07724">
    <property type="entry name" value="AAA_2"/>
    <property type="match status" value="1"/>
</dbReference>
<dbReference type="SMART" id="SM00382">
    <property type="entry name" value="AAA"/>
    <property type="match status" value="1"/>
</dbReference>
<dbReference type="SMART" id="SM01086">
    <property type="entry name" value="ClpB_D2-small"/>
    <property type="match status" value="1"/>
</dbReference>
<dbReference type="SUPFAM" id="SSF52540">
    <property type="entry name" value="P-loop containing nucleoside triphosphate hydrolases"/>
    <property type="match status" value="1"/>
</dbReference>